<keyword id="KW-0963">Cytoplasm</keyword>
<keyword id="KW-0489">Methyltransferase</keyword>
<keyword id="KW-0949">S-adenosyl-L-methionine</keyword>
<keyword id="KW-0808">Transferase</keyword>
<protein>
    <recommendedName>
        <fullName evidence="1">Ribosomal protein L11 methyltransferase</fullName>
        <shortName evidence="1">L11 Mtase</shortName>
        <ecNumber evidence="1">2.1.1.-</ecNumber>
    </recommendedName>
</protein>
<name>PRMA_STRPG</name>
<reference key="1">
    <citation type="journal article" date="2007" name="J. Bacteriol.">
        <title>Complete genome of acute rheumatic fever-associated serotype M5 Streptococcus pyogenes strain Manfredo.</title>
        <authorList>
            <person name="Holden M.T.G."/>
            <person name="Scott A."/>
            <person name="Cherevach I."/>
            <person name="Chillingworth T."/>
            <person name="Churcher C."/>
            <person name="Cronin A."/>
            <person name="Dowd L."/>
            <person name="Feltwell T."/>
            <person name="Hamlin N."/>
            <person name="Holroyd S."/>
            <person name="Jagels K."/>
            <person name="Moule S."/>
            <person name="Mungall K."/>
            <person name="Quail M.A."/>
            <person name="Price C."/>
            <person name="Rabbinowitsch E."/>
            <person name="Sharp S."/>
            <person name="Skelton J."/>
            <person name="Whitehead S."/>
            <person name="Barrell B.G."/>
            <person name="Kehoe M."/>
            <person name="Parkhill J."/>
        </authorList>
    </citation>
    <scope>NUCLEOTIDE SEQUENCE [LARGE SCALE GENOMIC DNA]</scope>
    <source>
        <strain>Manfredo</strain>
    </source>
</reference>
<gene>
    <name evidence="1" type="primary">prmA</name>
    <name type="ordered locus">SpyM51664</name>
</gene>
<feature type="chain" id="PRO_1000046109" description="Ribosomal protein L11 methyltransferase">
    <location>
        <begin position="1"/>
        <end position="317"/>
    </location>
</feature>
<feature type="binding site" evidence="1">
    <location>
        <position position="158"/>
    </location>
    <ligand>
        <name>S-adenosyl-L-methionine</name>
        <dbReference type="ChEBI" id="CHEBI:59789"/>
    </ligand>
</feature>
<feature type="binding site" evidence="1">
    <location>
        <position position="179"/>
    </location>
    <ligand>
        <name>S-adenosyl-L-methionine</name>
        <dbReference type="ChEBI" id="CHEBI:59789"/>
    </ligand>
</feature>
<feature type="binding site" evidence="1">
    <location>
        <position position="201"/>
    </location>
    <ligand>
        <name>S-adenosyl-L-methionine</name>
        <dbReference type="ChEBI" id="CHEBI:59789"/>
    </ligand>
</feature>
<feature type="binding site" evidence="1">
    <location>
        <position position="244"/>
    </location>
    <ligand>
        <name>S-adenosyl-L-methionine</name>
        <dbReference type="ChEBI" id="CHEBI:59789"/>
    </ligand>
</feature>
<accession>A2RGK2</accession>
<proteinExistence type="inferred from homology"/>
<dbReference type="EC" id="2.1.1.-" evidence="1"/>
<dbReference type="EMBL" id="AM295007">
    <property type="protein sequence ID" value="CAM30984.1"/>
    <property type="molecule type" value="Genomic_DNA"/>
</dbReference>
<dbReference type="RefSeq" id="WP_011889177.1">
    <property type="nucleotide sequence ID" value="NC_009332.1"/>
</dbReference>
<dbReference type="SMR" id="A2RGK2"/>
<dbReference type="KEGG" id="spf:SpyM51664"/>
<dbReference type="HOGENOM" id="CLU_049382_0_1_9"/>
<dbReference type="GO" id="GO:0005737">
    <property type="term" value="C:cytoplasm"/>
    <property type="evidence" value="ECO:0007669"/>
    <property type="project" value="UniProtKB-SubCell"/>
</dbReference>
<dbReference type="GO" id="GO:0016279">
    <property type="term" value="F:protein-lysine N-methyltransferase activity"/>
    <property type="evidence" value="ECO:0007669"/>
    <property type="project" value="RHEA"/>
</dbReference>
<dbReference type="GO" id="GO:0032259">
    <property type="term" value="P:methylation"/>
    <property type="evidence" value="ECO:0007669"/>
    <property type="project" value="UniProtKB-KW"/>
</dbReference>
<dbReference type="CDD" id="cd02440">
    <property type="entry name" value="AdoMet_MTases"/>
    <property type="match status" value="1"/>
</dbReference>
<dbReference type="Gene3D" id="3.40.50.150">
    <property type="entry name" value="Vaccinia Virus protein VP39"/>
    <property type="match status" value="1"/>
</dbReference>
<dbReference type="HAMAP" id="MF_00735">
    <property type="entry name" value="Methyltr_PrmA"/>
    <property type="match status" value="1"/>
</dbReference>
<dbReference type="InterPro" id="IPR050078">
    <property type="entry name" value="Ribosomal_L11_MeTrfase_PrmA"/>
</dbReference>
<dbReference type="InterPro" id="IPR004498">
    <property type="entry name" value="Ribosomal_PrmA_MeTrfase"/>
</dbReference>
<dbReference type="InterPro" id="IPR029063">
    <property type="entry name" value="SAM-dependent_MTases_sf"/>
</dbReference>
<dbReference type="NCBIfam" id="TIGR00406">
    <property type="entry name" value="prmA"/>
    <property type="match status" value="1"/>
</dbReference>
<dbReference type="PANTHER" id="PTHR43648">
    <property type="entry name" value="ELECTRON TRANSFER FLAVOPROTEIN BETA SUBUNIT LYSINE METHYLTRANSFERASE"/>
    <property type="match status" value="1"/>
</dbReference>
<dbReference type="PANTHER" id="PTHR43648:SF1">
    <property type="entry name" value="ELECTRON TRANSFER FLAVOPROTEIN BETA SUBUNIT LYSINE METHYLTRANSFERASE"/>
    <property type="match status" value="1"/>
</dbReference>
<dbReference type="Pfam" id="PF06325">
    <property type="entry name" value="PrmA"/>
    <property type="match status" value="1"/>
</dbReference>
<dbReference type="PIRSF" id="PIRSF000401">
    <property type="entry name" value="RPL11_MTase"/>
    <property type="match status" value="1"/>
</dbReference>
<dbReference type="SUPFAM" id="SSF53335">
    <property type="entry name" value="S-adenosyl-L-methionine-dependent methyltransferases"/>
    <property type="match status" value="1"/>
</dbReference>
<sequence length="317" mass="34330">METWQEVTVHVHRDAQEAVSYVLIETGSQGVAIADSADYIGQKDRFGELYPDVEQSDMIAITAYYPSSTNLADVIATINEQLAELASFGLQVGQVTVDSQELAEEDWADNWKKYYEPARITHDLTIVPSWTDYDASAGEKVIKLDPGMAFGTGTHPTTKMSLFALEQILRGGETVIDVGTGSGVLSIASSLLGAKTIYAYDLDDVAVRVAQENIDLNQGTDNIHVAAGDLLKGVSQEADVIVANILADILVLLTDDAYRLVKDQGYLILSGIISEKLDMVLEAAFSAGFFLETHMIQGEWNALVFKKTDDISGVIGG</sequence>
<organism>
    <name type="scientific">Streptococcus pyogenes serotype M5 (strain Manfredo)</name>
    <dbReference type="NCBI Taxonomy" id="160491"/>
    <lineage>
        <taxon>Bacteria</taxon>
        <taxon>Bacillati</taxon>
        <taxon>Bacillota</taxon>
        <taxon>Bacilli</taxon>
        <taxon>Lactobacillales</taxon>
        <taxon>Streptococcaceae</taxon>
        <taxon>Streptococcus</taxon>
    </lineage>
</organism>
<comment type="function">
    <text evidence="1">Methylates ribosomal protein L11.</text>
</comment>
<comment type="catalytic activity">
    <reaction evidence="1">
        <text>L-lysyl-[protein] + 3 S-adenosyl-L-methionine = N(6),N(6),N(6)-trimethyl-L-lysyl-[protein] + 3 S-adenosyl-L-homocysteine + 3 H(+)</text>
        <dbReference type="Rhea" id="RHEA:54192"/>
        <dbReference type="Rhea" id="RHEA-COMP:9752"/>
        <dbReference type="Rhea" id="RHEA-COMP:13826"/>
        <dbReference type="ChEBI" id="CHEBI:15378"/>
        <dbReference type="ChEBI" id="CHEBI:29969"/>
        <dbReference type="ChEBI" id="CHEBI:57856"/>
        <dbReference type="ChEBI" id="CHEBI:59789"/>
        <dbReference type="ChEBI" id="CHEBI:61961"/>
    </reaction>
</comment>
<comment type="subcellular location">
    <subcellularLocation>
        <location evidence="1">Cytoplasm</location>
    </subcellularLocation>
</comment>
<comment type="similarity">
    <text evidence="1">Belongs to the methyltransferase superfamily. PrmA family.</text>
</comment>
<evidence type="ECO:0000255" key="1">
    <source>
        <dbReference type="HAMAP-Rule" id="MF_00735"/>
    </source>
</evidence>